<comment type="function">
    <text evidence="1">Specifically methylates the guanosine in position 1516 of 16S rRNA.</text>
</comment>
<comment type="catalytic activity">
    <reaction evidence="1">
        <text>guanosine(1516) in 16S rRNA + S-adenosyl-L-methionine = N(2)-methylguanosine(1516) in 16S rRNA + S-adenosyl-L-homocysteine + H(+)</text>
        <dbReference type="Rhea" id="RHEA:43220"/>
        <dbReference type="Rhea" id="RHEA-COMP:10412"/>
        <dbReference type="Rhea" id="RHEA-COMP:10413"/>
        <dbReference type="ChEBI" id="CHEBI:15378"/>
        <dbReference type="ChEBI" id="CHEBI:57856"/>
        <dbReference type="ChEBI" id="CHEBI:59789"/>
        <dbReference type="ChEBI" id="CHEBI:74269"/>
        <dbReference type="ChEBI" id="CHEBI:74481"/>
        <dbReference type="EC" id="2.1.1.242"/>
    </reaction>
</comment>
<comment type="subcellular location">
    <subcellularLocation>
        <location evidence="1">Cytoplasm</location>
    </subcellularLocation>
</comment>
<comment type="similarity">
    <text evidence="1">Belongs to the methyltransferase superfamily. RsmJ family.</text>
</comment>
<reference key="1">
    <citation type="journal article" date="2006" name="J. Bacteriol.">
        <title>Complete genome sequence of Yersinia pestis strains Antiqua and Nepal516: evidence of gene reduction in an emerging pathogen.</title>
        <authorList>
            <person name="Chain P.S.G."/>
            <person name="Hu P."/>
            <person name="Malfatti S.A."/>
            <person name="Radnedge L."/>
            <person name="Larimer F."/>
            <person name="Vergez L.M."/>
            <person name="Worsham P."/>
            <person name="Chu M.C."/>
            <person name="Andersen G.L."/>
        </authorList>
    </citation>
    <scope>NUCLEOTIDE SEQUENCE [LARGE SCALE GENOMIC DNA]</scope>
    <source>
        <strain>Nepal516</strain>
    </source>
</reference>
<reference key="2">
    <citation type="submission" date="2009-04" db="EMBL/GenBank/DDBJ databases">
        <title>Yersinia pestis Nepal516A whole genome shotgun sequencing project.</title>
        <authorList>
            <person name="Plunkett G. III"/>
            <person name="Anderson B.D."/>
            <person name="Baumler D.J."/>
            <person name="Burland V."/>
            <person name="Cabot E.L."/>
            <person name="Glasner J.D."/>
            <person name="Mau B."/>
            <person name="Neeno-Eckwall E."/>
            <person name="Perna N.T."/>
            <person name="Munk A.C."/>
            <person name="Tapia R."/>
            <person name="Green L.D."/>
            <person name="Rogers Y.C."/>
            <person name="Detter J.C."/>
            <person name="Bruce D.C."/>
            <person name="Brettin T.S."/>
        </authorList>
    </citation>
    <scope>NUCLEOTIDE SEQUENCE [LARGE SCALE GENOMIC DNA]</scope>
    <source>
        <strain>Nepal516</strain>
    </source>
</reference>
<feature type="chain" id="PRO_0000292654" description="Ribosomal RNA small subunit methyltransferase J">
    <location>
        <begin position="1"/>
        <end position="256"/>
    </location>
</feature>
<feature type="binding site" evidence="1">
    <location>
        <begin position="104"/>
        <end position="105"/>
    </location>
    <ligand>
        <name>S-adenosyl-L-methionine</name>
        <dbReference type="ChEBI" id="CHEBI:59789"/>
    </ligand>
</feature>
<feature type="binding site" evidence="1">
    <location>
        <begin position="120"/>
        <end position="121"/>
    </location>
    <ligand>
        <name>S-adenosyl-L-methionine</name>
        <dbReference type="ChEBI" id="CHEBI:59789"/>
    </ligand>
</feature>
<feature type="binding site" evidence="1">
    <location>
        <begin position="156"/>
        <end position="157"/>
    </location>
    <ligand>
        <name>S-adenosyl-L-methionine</name>
        <dbReference type="ChEBI" id="CHEBI:59789"/>
    </ligand>
</feature>
<feature type="binding site" evidence="1">
    <location>
        <position position="174"/>
    </location>
    <ligand>
        <name>S-adenosyl-L-methionine</name>
        <dbReference type="ChEBI" id="CHEBI:59789"/>
    </ligand>
</feature>
<organism>
    <name type="scientific">Yersinia pestis bv. Antiqua (strain Nepal516)</name>
    <dbReference type="NCBI Taxonomy" id="377628"/>
    <lineage>
        <taxon>Bacteria</taxon>
        <taxon>Pseudomonadati</taxon>
        <taxon>Pseudomonadota</taxon>
        <taxon>Gammaproteobacteria</taxon>
        <taxon>Enterobacterales</taxon>
        <taxon>Yersiniaceae</taxon>
        <taxon>Yersinia</taxon>
    </lineage>
</organism>
<keyword id="KW-0963">Cytoplasm</keyword>
<keyword id="KW-0489">Methyltransferase</keyword>
<keyword id="KW-0698">rRNA processing</keyword>
<keyword id="KW-0949">S-adenosyl-L-methionine</keyword>
<keyword id="KW-0808">Transferase</keyword>
<accession>Q1CDI1</accession>
<accession>D1Q1W3</accession>
<name>RSMJ_YERPN</name>
<proteinExistence type="inferred from homology"/>
<gene>
    <name evidence="1" type="primary">rsmJ</name>
    <name type="ordered locus">YPN_3622</name>
    <name type="ORF">YP516_4115</name>
</gene>
<evidence type="ECO:0000255" key="1">
    <source>
        <dbReference type="HAMAP-Rule" id="MF_01523"/>
    </source>
</evidence>
<dbReference type="EC" id="2.1.1.242" evidence="1"/>
<dbReference type="EMBL" id="CP000305">
    <property type="protein sequence ID" value="ABG19949.1"/>
    <property type="molecule type" value="Genomic_DNA"/>
</dbReference>
<dbReference type="EMBL" id="ACNQ01000019">
    <property type="protein sequence ID" value="EEO74516.1"/>
    <property type="molecule type" value="Genomic_DNA"/>
</dbReference>
<dbReference type="RefSeq" id="WP_002215483.1">
    <property type="nucleotide sequence ID" value="NZ_ACNQ01000019.1"/>
</dbReference>
<dbReference type="SMR" id="Q1CDI1"/>
<dbReference type="GeneID" id="96663312"/>
<dbReference type="KEGG" id="ypn:YPN_3622"/>
<dbReference type="HOGENOM" id="CLU_076324_0_0_6"/>
<dbReference type="Proteomes" id="UP000008936">
    <property type="component" value="Chromosome"/>
</dbReference>
<dbReference type="GO" id="GO:0005737">
    <property type="term" value="C:cytoplasm"/>
    <property type="evidence" value="ECO:0007669"/>
    <property type="project" value="UniProtKB-SubCell"/>
</dbReference>
<dbReference type="GO" id="GO:0008990">
    <property type="term" value="F:rRNA (guanine-N2-)-methyltransferase activity"/>
    <property type="evidence" value="ECO:0007669"/>
    <property type="project" value="UniProtKB-UniRule"/>
</dbReference>
<dbReference type="CDD" id="cd02440">
    <property type="entry name" value="AdoMet_MTases"/>
    <property type="match status" value="1"/>
</dbReference>
<dbReference type="Gene3D" id="3.40.50.150">
    <property type="entry name" value="Vaccinia Virus protein VP39"/>
    <property type="match status" value="1"/>
</dbReference>
<dbReference type="Gene3D" id="3.40.1630.10">
    <property type="entry name" value="YhiQ-like domain"/>
    <property type="match status" value="1"/>
</dbReference>
<dbReference type="HAMAP" id="MF_01523">
    <property type="entry name" value="16SrRNA_methyltr_J"/>
    <property type="match status" value="1"/>
</dbReference>
<dbReference type="InterPro" id="IPR007536">
    <property type="entry name" value="16SrRNA_methylTrfase_J"/>
</dbReference>
<dbReference type="InterPro" id="IPR029063">
    <property type="entry name" value="SAM-dependent_MTases_sf"/>
</dbReference>
<dbReference type="NCBIfam" id="NF008012">
    <property type="entry name" value="PRK10742.1"/>
    <property type="match status" value="1"/>
</dbReference>
<dbReference type="PANTHER" id="PTHR36112">
    <property type="entry name" value="RIBOSOMAL RNA SMALL SUBUNIT METHYLTRANSFERASE J"/>
    <property type="match status" value="1"/>
</dbReference>
<dbReference type="PANTHER" id="PTHR36112:SF1">
    <property type="entry name" value="RIBOSOMAL RNA SMALL SUBUNIT METHYLTRANSFERASE J"/>
    <property type="match status" value="1"/>
</dbReference>
<dbReference type="Pfam" id="PF04445">
    <property type="entry name" value="SAM_MT"/>
    <property type="match status" value="1"/>
</dbReference>
<dbReference type="SUPFAM" id="SSF53335">
    <property type="entry name" value="S-adenosyl-L-methionine-dependent methyltransferases"/>
    <property type="match status" value="1"/>
</dbReference>
<sequence length="256" mass="27595">MSHVSICLLSEAGADPGALSILADRWGLVSDDQAVMALVLTAERLELRKRDEPKLGGIYVDFVSGTQAHRRKFGGGRGEAVAKAVGIKKGYLPRVVDATAGLGRDAFVLAALGCQVQMLERNPVVAALLDDGLRRGYLDAEIGPWLRERLTLLHASSLTALVAIEPRPEVVYLDPMYPHRQKSALVKKEMRVFQSLVGADNDADGLLAPARALATKRVVVKRPDYAEPLAGVAAQAAVVTKSHRFDIYPSSVTPPR</sequence>
<protein>
    <recommendedName>
        <fullName evidence="1">Ribosomal RNA small subunit methyltransferase J</fullName>
        <ecNumber evidence="1">2.1.1.242</ecNumber>
    </recommendedName>
    <alternativeName>
        <fullName evidence="1">16S rRNA m2G1516 methyltransferase</fullName>
    </alternativeName>
    <alternativeName>
        <fullName evidence="1">rRNA (guanine-N(2)-)-methyltransferase</fullName>
    </alternativeName>
</protein>